<evidence type="ECO:0000250" key="1">
    <source>
        <dbReference type="UniProtKB" id="Q9H5V9"/>
    </source>
</evidence>
<evidence type="ECO:0000255" key="2"/>
<evidence type="ECO:0000256" key="3">
    <source>
        <dbReference type="SAM" id="MobiDB-lite"/>
    </source>
</evidence>
<evidence type="ECO:0000269" key="4">
    <source>
    </source>
</evidence>
<evidence type="ECO:0000305" key="5"/>
<proteinExistence type="evidence at protein level"/>
<sequence>MPKVVSRSIVCSDTKDQEEYNEEKPLNIYYCLCNKMALILDCTLEQLPLREVDNARVINANDHANKLTHNPTPRMVYIKRKSRGNGIEKQYRYKCRSCSLPLYYRHSPDSHVTFVMSNALIRNKGESPLTQLLNSEIKGSFKAPAAKPATSAGPDDSGIVDASGKKVVVTRHTKNMGKFSSVTVSTIDEEEDEIEAREIADSYANNARIIEKQLQRKGGKLSDVGIKTKTEDAPPPQKKQRGTLLER</sequence>
<dbReference type="EMBL" id="AE014134">
    <property type="protein sequence ID" value="AAF53334.1"/>
    <property type="molecule type" value="Genomic_DNA"/>
</dbReference>
<dbReference type="EMBL" id="AY113531">
    <property type="protein sequence ID" value="AAM29536.1"/>
    <property type="molecule type" value="mRNA"/>
</dbReference>
<dbReference type="RefSeq" id="NP_001260451.1">
    <property type="nucleotide sequence ID" value="NM_001273522.1"/>
</dbReference>
<dbReference type="RefSeq" id="NP_609677.1">
    <property type="nucleotide sequence ID" value="NM_135833.4"/>
</dbReference>
<dbReference type="SMR" id="Q9V412"/>
<dbReference type="BioGRID" id="60821">
    <property type="interactions" value="3"/>
</dbReference>
<dbReference type="FunCoup" id="Q9V412">
    <property type="interactions" value="1692"/>
</dbReference>
<dbReference type="IntAct" id="Q9V412">
    <property type="interactions" value="1"/>
</dbReference>
<dbReference type="STRING" id="7227.FBpp0304016"/>
<dbReference type="iPTMnet" id="Q9V412"/>
<dbReference type="PaxDb" id="7227-FBpp0304016"/>
<dbReference type="DNASU" id="34788"/>
<dbReference type="EnsemblMetazoa" id="FBtr0080540">
    <property type="protein sequence ID" value="FBpp0080117"/>
    <property type="gene ID" value="FBgn0028919"/>
</dbReference>
<dbReference type="EnsemblMetazoa" id="FBtr0331626">
    <property type="protein sequence ID" value="FBpp0304016"/>
    <property type="gene ID" value="FBgn0028919"/>
</dbReference>
<dbReference type="GeneID" id="34788"/>
<dbReference type="KEGG" id="dme:Dmel_CG16865"/>
<dbReference type="UCSC" id="CG16865-RA">
    <property type="organism name" value="d. melanogaster"/>
</dbReference>
<dbReference type="AGR" id="FB:FBgn0028919"/>
<dbReference type="FlyBase" id="FBgn0028919">
    <property type="gene designation" value="CG16865"/>
</dbReference>
<dbReference type="VEuPathDB" id="VectorBase:FBgn0028919"/>
<dbReference type="eggNOG" id="KOG4397">
    <property type="taxonomic scope" value="Eukaryota"/>
</dbReference>
<dbReference type="GeneTree" id="ENSGT00390000002197"/>
<dbReference type="HOGENOM" id="CLU_099571_1_0_1"/>
<dbReference type="InParanoid" id="Q9V412"/>
<dbReference type="OMA" id="HVTFVMF"/>
<dbReference type="OrthoDB" id="418131at2759"/>
<dbReference type="PhylomeDB" id="Q9V412"/>
<dbReference type="Reactome" id="R-DME-72163">
    <property type="pathway name" value="mRNA Splicing - Major Pathway"/>
</dbReference>
<dbReference type="SignaLink" id="Q9V412"/>
<dbReference type="BioGRID-ORCS" id="34788">
    <property type="hits" value="0 hits in 1 CRISPR screen"/>
</dbReference>
<dbReference type="GenomeRNAi" id="34788"/>
<dbReference type="PRO" id="PR:Q9V412"/>
<dbReference type="Proteomes" id="UP000000803">
    <property type="component" value="Chromosome 2L"/>
</dbReference>
<dbReference type="Bgee" id="FBgn0028919">
    <property type="expression patterns" value="Expressed in mid-late elongation-stage spermatid (Drosophila) in testis and 58 other cell types or tissues"/>
</dbReference>
<dbReference type="ExpressionAtlas" id="Q9V412">
    <property type="expression patterns" value="baseline and differential"/>
</dbReference>
<dbReference type="GO" id="GO:0071013">
    <property type="term" value="C:catalytic step 2 spliceosome"/>
    <property type="evidence" value="ECO:0007005"/>
    <property type="project" value="FlyBase"/>
</dbReference>
<dbReference type="GO" id="GO:0005737">
    <property type="term" value="C:cytoplasm"/>
    <property type="evidence" value="ECO:0000250"/>
    <property type="project" value="UniProtKB"/>
</dbReference>
<dbReference type="GO" id="GO:0090158">
    <property type="term" value="P:endoplasmic reticulum membrane organization"/>
    <property type="evidence" value="ECO:0000250"/>
    <property type="project" value="UniProtKB"/>
</dbReference>
<dbReference type="GO" id="GO:0006888">
    <property type="term" value="P:endoplasmic reticulum to Golgi vesicle-mediated transport"/>
    <property type="evidence" value="ECO:0000250"/>
    <property type="project" value="UniProtKB"/>
</dbReference>
<dbReference type="GO" id="GO:0000398">
    <property type="term" value="P:mRNA splicing, via spliceosome"/>
    <property type="evidence" value="ECO:0000305"/>
    <property type="project" value="FlyBase"/>
</dbReference>
<dbReference type="InterPro" id="IPR029704">
    <property type="entry name" value="STEEP-like"/>
</dbReference>
<dbReference type="PANTHER" id="PTHR46355:SF1">
    <property type="entry name" value="STING ER EXIT PROTEIN"/>
    <property type="match status" value="1"/>
</dbReference>
<dbReference type="PANTHER" id="PTHR46355">
    <property type="entry name" value="UPF0428 PROTEIN CXORF56"/>
    <property type="match status" value="1"/>
</dbReference>
<name>STEEP_DROME</name>
<keyword id="KW-0175">Coiled coil</keyword>
<keyword id="KW-0597">Phosphoprotein</keyword>
<keyword id="KW-1185">Reference proteome</keyword>
<protein>
    <recommendedName>
        <fullName evidence="1">STING ER exit protein</fullName>
        <shortName evidence="1">STEEP</shortName>
    </recommendedName>
</protein>
<accession>Q9V412</accession>
<reference key="1">
    <citation type="journal article" date="2000" name="Science">
        <title>The genome sequence of Drosophila melanogaster.</title>
        <authorList>
            <person name="Adams M.D."/>
            <person name="Celniker S.E."/>
            <person name="Holt R.A."/>
            <person name="Evans C.A."/>
            <person name="Gocayne J.D."/>
            <person name="Amanatides P.G."/>
            <person name="Scherer S.E."/>
            <person name="Li P.W."/>
            <person name="Hoskins R.A."/>
            <person name="Galle R.F."/>
            <person name="George R.A."/>
            <person name="Lewis S.E."/>
            <person name="Richards S."/>
            <person name="Ashburner M."/>
            <person name="Henderson S.N."/>
            <person name="Sutton G.G."/>
            <person name="Wortman J.R."/>
            <person name="Yandell M.D."/>
            <person name="Zhang Q."/>
            <person name="Chen L.X."/>
            <person name="Brandon R.C."/>
            <person name="Rogers Y.-H.C."/>
            <person name="Blazej R.G."/>
            <person name="Champe M."/>
            <person name="Pfeiffer B.D."/>
            <person name="Wan K.H."/>
            <person name="Doyle C."/>
            <person name="Baxter E.G."/>
            <person name="Helt G."/>
            <person name="Nelson C.R."/>
            <person name="Miklos G.L.G."/>
            <person name="Abril J.F."/>
            <person name="Agbayani A."/>
            <person name="An H.-J."/>
            <person name="Andrews-Pfannkoch C."/>
            <person name="Baldwin D."/>
            <person name="Ballew R.M."/>
            <person name="Basu A."/>
            <person name="Baxendale J."/>
            <person name="Bayraktaroglu L."/>
            <person name="Beasley E.M."/>
            <person name="Beeson K.Y."/>
            <person name="Benos P.V."/>
            <person name="Berman B.P."/>
            <person name="Bhandari D."/>
            <person name="Bolshakov S."/>
            <person name="Borkova D."/>
            <person name="Botchan M.R."/>
            <person name="Bouck J."/>
            <person name="Brokstein P."/>
            <person name="Brottier P."/>
            <person name="Burtis K.C."/>
            <person name="Busam D.A."/>
            <person name="Butler H."/>
            <person name="Cadieu E."/>
            <person name="Center A."/>
            <person name="Chandra I."/>
            <person name="Cherry J.M."/>
            <person name="Cawley S."/>
            <person name="Dahlke C."/>
            <person name="Davenport L.B."/>
            <person name="Davies P."/>
            <person name="de Pablos B."/>
            <person name="Delcher A."/>
            <person name="Deng Z."/>
            <person name="Mays A.D."/>
            <person name="Dew I."/>
            <person name="Dietz S.M."/>
            <person name="Dodson K."/>
            <person name="Doup L.E."/>
            <person name="Downes M."/>
            <person name="Dugan-Rocha S."/>
            <person name="Dunkov B.C."/>
            <person name="Dunn P."/>
            <person name="Durbin K.J."/>
            <person name="Evangelista C.C."/>
            <person name="Ferraz C."/>
            <person name="Ferriera S."/>
            <person name="Fleischmann W."/>
            <person name="Fosler C."/>
            <person name="Gabrielian A.E."/>
            <person name="Garg N.S."/>
            <person name="Gelbart W.M."/>
            <person name="Glasser K."/>
            <person name="Glodek A."/>
            <person name="Gong F."/>
            <person name="Gorrell J.H."/>
            <person name="Gu Z."/>
            <person name="Guan P."/>
            <person name="Harris M."/>
            <person name="Harris N.L."/>
            <person name="Harvey D.A."/>
            <person name="Heiman T.J."/>
            <person name="Hernandez J.R."/>
            <person name="Houck J."/>
            <person name="Hostin D."/>
            <person name="Houston K.A."/>
            <person name="Howland T.J."/>
            <person name="Wei M.-H."/>
            <person name="Ibegwam C."/>
            <person name="Jalali M."/>
            <person name="Kalush F."/>
            <person name="Karpen G.H."/>
            <person name="Ke Z."/>
            <person name="Kennison J.A."/>
            <person name="Ketchum K.A."/>
            <person name="Kimmel B.E."/>
            <person name="Kodira C.D."/>
            <person name="Kraft C.L."/>
            <person name="Kravitz S."/>
            <person name="Kulp D."/>
            <person name="Lai Z."/>
            <person name="Lasko P."/>
            <person name="Lei Y."/>
            <person name="Levitsky A.A."/>
            <person name="Li J.H."/>
            <person name="Li Z."/>
            <person name="Liang Y."/>
            <person name="Lin X."/>
            <person name="Liu X."/>
            <person name="Mattei B."/>
            <person name="McIntosh T.C."/>
            <person name="McLeod M.P."/>
            <person name="McPherson D."/>
            <person name="Merkulov G."/>
            <person name="Milshina N.V."/>
            <person name="Mobarry C."/>
            <person name="Morris J."/>
            <person name="Moshrefi A."/>
            <person name="Mount S.M."/>
            <person name="Moy M."/>
            <person name="Murphy B."/>
            <person name="Murphy L."/>
            <person name="Muzny D.M."/>
            <person name="Nelson D.L."/>
            <person name="Nelson D.R."/>
            <person name="Nelson K.A."/>
            <person name="Nixon K."/>
            <person name="Nusskern D.R."/>
            <person name="Pacleb J.M."/>
            <person name="Palazzolo M."/>
            <person name="Pittman G.S."/>
            <person name="Pan S."/>
            <person name="Pollard J."/>
            <person name="Puri V."/>
            <person name="Reese M.G."/>
            <person name="Reinert K."/>
            <person name="Remington K."/>
            <person name="Saunders R.D.C."/>
            <person name="Scheeler F."/>
            <person name="Shen H."/>
            <person name="Shue B.C."/>
            <person name="Siden-Kiamos I."/>
            <person name="Simpson M."/>
            <person name="Skupski M.P."/>
            <person name="Smith T.J."/>
            <person name="Spier E."/>
            <person name="Spradling A.C."/>
            <person name="Stapleton M."/>
            <person name="Strong R."/>
            <person name="Sun E."/>
            <person name="Svirskas R."/>
            <person name="Tector C."/>
            <person name="Turner R."/>
            <person name="Venter E."/>
            <person name="Wang A.H."/>
            <person name="Wang X."/>
            <person name="Wang Z.-Y."/>
            <person name="Wassarman D.A."/>
            <person name="Weinstock G.M."/>
            <person name="Weissenbach J."/>
            <person name="Williams S.M."/>
            <person name="Woodage T."/>
            <person name="Worley K.C."/>
            <person name="Wu D."/>
            <person name="Yang S."/>
            <person name="Yao Q.A."/>
            <person name="Ye J."/>
            <person name="Yeh R.-F."/>
            <person name="Zaveri J.S."/>
            <person name="Zhan M."/>
            <person name="Zhang G."/>
            <person name="Zhao Q."/>
            <person name="Zheng L."/>
            <person name="Zheng X.H."/>
            <person name="Zhong F.N."/>
            <person name="Zhong W."/>
            <person name="Zhou X."/>
            <person name="Zhu S.C."/>
            <person name="Zhu X."/>
            <person name="Smith H.O."/>
            <person name="Gibbs R.A."/>
            <person name="Myers E.W."/>
            <person name="Rubin G.M."/>
            <person name="Venter J.C."/>
        </authorList>
    </citation>
    <scope>NUCLEOTIDE SEQUENCE [LARGE SCALE GENOMIC DNA]</scope>
    <source>
        <strain>Berkeley</strain>
    </source>
</reference>
<reference key="2">
    <citation type="journal article" date="2002" name="Genome Biol.">
        <title>Annotation of the Drosophila melanogaster euchromatic genome: a systematic review.</title>
        <authorList>
            <person name="Misra S."/>
            <person name="Crosby M.A."/>
            <person name="Mungall C.J."/>
            <person name="Matthews B.B."/>
            <person name="Campbell K.S."/>
            <person name="Hradecky P."/>
            <person name="Huang Y."/>
            <person name="Kaminker J.S."/>
            <person name="Millburn G.H."/>
            <person name="Prochnik S.E."/>
            <person name="Smith C.D."/>
            <person name="Tupy J.L."/>
            <person name="Whitfield E.J."/>
            <person name="Bayraktaroglu L."/>
            <person name="Berman B.P."/>
            <person name="Bettencourt B.R."/>
            <person name="Celniker S.E."/>
            <person name="de Grey A.D.N.J."/>
            <person name="Drysdale R.A."/>
            <person name="Harris N.L."/>
            <person name="Richter J."/>
            <person name="Russo S."/>
            <person name="Schroeder A.J."/>
            <person name="Shu S.Q."/>
            <person name="Stapleton M."/>
            <person name="Yamada C."/>
            <person name="Ashburner M."/>
            <person name="Gelbart W.M."/>
            <person name="Rubin G.M."/>
            <person name="Lewis S.E."/>
        </authorList>
    </citation>
    <scope>GENOME REANNOTATION</scope>
    <source>
        <strain>Berkeley</strain>
    </source>
</reference>
<reference key="3">
    <citation type="journal article" date="2002" name="Genome Biol.">
        <title>A Drosophila full-length cDNA resource.</title>
        <authorList>
            <person name="Stapleton M."/>
            <person name="Carlson J.W."/>
            <person name="Brokstein P."/>
            <person name="Yu C."/>
            <person name="Champe M."/>
            <person name="George R.A."/>
            <person name="Guarin H."/>
            <person name="Kronmiller B."/>
            <person name="Pacleb J.M."/>
            <person name="Park S."/>
            <person name="Wan K.H."/>
            <person name="Rubin G.M."/>
            <person name="Celniker S.E."/>
        </authorList>
    </citation>
    <scope>NUCLEOTIDE SEQUENCE [LARGE SCALE MRNA]</scope>
    <source>
        <strain>Berkeley</strain>
        <tissue>Embryo</tissue>
    </source>
</reference>
<reference key="4">
    <citation type="journal article" date="2008" name="J. Proteome Res.">
        <title>Phosphoproteome analysis of Drosophila melanogaster embryos.</title>
        <authorList>
            <person name="Zhai B."/>
            <person name="Villen J."/>
            <person name="Beausoleil S.A."/>
            <person name="Mintseris J."/>
            <person name="Gygi S.P."/>
        </authorList>
    </citation>
    <scope>PHOSPHORYLATION [LARGE SCALE ANALYSIS] AT SER-127</scope>
    <scope>IDENTIFICATION BY MASS SPECTROMETRY</scope>
    <source>
        <tissue>Embryo</tissue>
    </source>
</reference>
<comment type="function">
    <text evidence="1">Molecular adapter that stimulates membrane curvature formation and subsequent endoplasmic reticulum exit site (ERES) establishment by recruiting PI3K complex I, leading to COPII vesicle-mediated transport (By similarity).</text>
</comment>
<comment type="similarity">
    <text evidence="5">Belongs to the STEEP1 family.</text>
</comment>
<organism>
    <name type="scientific">Drosophila melanogaster</name>
    <name type="common">Fruit fly</name>
    <dbReference type="NCBI Taxonomy" id="7227"/>
    <lineage>
        <taxon>Eukaryota</taxon>
        <taxon>Metazoa</taxon>
        <taxon>Ecdysozoa</taxon>
        <taxon>Arthropoda</taxon>
        <taxon>Hexapoda</taxon>
        <taxon>Insecta</taxon>
        <taxon>Pterygota</taxon>
        <taxon>Neoptera</taxon>
        <taxon>Endopterygota</taxon>
        <taxon>Diptera</taxon>
        <taxon>Brachycera</taxon>
        <taxon>Muscomorpha</taxon>
        <taxon>Ephydroidea</taxon>
        <taxon>Drosophilidae</taxon>
        <taxon>Drosophila</taxon>
        <taxon>Sophophora</taxon>
    </lineage>
</organism>
<feature type="chain" id="PRO_0000287615" description="STING ER exit protein">
    <location>
        <begin position="1"/>
        <end position="247"/>
    </location>
</feature>
<feature type="region of interest" description="Disordered" evidence="3">
    <location>
        <begin position="215"/>
        <end position="247"/>
    </location>
</feature>
<feature type="coiled-coil region" evidence="2">
    <location>
        <begin position="195"/>
        <end position="216"/>
    </location>
</feature>
<feature type="modified residue" description="Phosphoserine" evidence="4">
    <location>
        <position position="127"/>
    </location>
</feature>
<gene>
    <name evidence="1" type="primary">Steep1</name>
    <name type="ORF">CG16865</name>
</gene>